<dbReference type="EMBL" id="CP000514">
    <property type="protein sequence ID" value="ABM17112.1"/>
    <property type="molecule type" value="Genomic_DNA"/>
</dbReference>
<dbReference type="RefSeq" id="WP_011783585.1">
    <property type="nucleotide sequence ID" value="NC_008740.1"/>
</dbReference>
<dbReference type="SMR" id="A1TWJ3"/>
<dbReference type="STRING" id="351348.Maqu_0004"/>
<dbReference type="DNASU" id="4654696"/>
<dbReference type="KEGG" id="maq:Maqu_0004"/>
<dbReference type="eggNOG" id="COG1195">
    <property type="taxonomic scope" value="Bacteria"/>
</dbReference>
<dbReference type="HOGENOM" id="CLU_040267_0_0_6"/>
<dbReference type="OrthoDB" id="9803889at2"/>
<dbReference type="Proteomes" id="UP000000998">
    <property type="component" value="Chromosome"/>
</dbReference>
<dbReference type="GO" id="GO:0005737">
    <property type="term" value="C:cytoplasm"/>
    <property type="evidence" value="ECO:0007669"/>
    <property type="project" value="UniProtKB-SubCell"/>
</dbReference>
<dbReference type="GO" id="GO:0005524">
    <property type="term" value="F:ATP binding"/>
    <property type="evidence" value="ECO:0007669"/>
    <property type="project" value="UniProtKB-UniRule"/>
</dbReference>
<dbReference type="GO" id="GO:0003697">
    <property type="term" value="F:single-stranded DNA binding"/>
    <property type="evidence" value="ECO:0007669"/>
    <property type="project" value="UniProtKB-UniRule"/>
</dbReference>
<dbReference type="GO" id="GO:0006260">
    <property type="term" value="P:DNA replication"/>
    <property type="evidence" value="ECO:0007669"/>
    <property type="project" value="UniProtKB-UniRule"/>
</dbReference>
<dbReference type="GO" id="GO:0000731">
    <property type="term" value="P:DNA synthesis involved in DNA repair"/>
    <property type="evidence" value="ECO:0007669"/>
    <property type="project" value="TreeGrafter"/>
</dbReference>
<dbReference type="GO" id="GO:0006302">
    <property type="term" value="P:double-strand break repair"/>
    <property type="evidence" value="ECO:0007669"/>
    <property type="project" value="TreeGrafter"/>
</dbReference>
<dbReference type="GO" id="GO:0009432">
    <property type="term" value="P:SOS response"/>
    <property type="evidence" value="ECO:0007669"/>
    <property type="project" value="UniProtKB-UniRule"/>
</dbReference>
<dbReference type="Gene3D" id="3.40.50.300">
    <property type="entry name" value="P-loop containing nucleotide triphosphate hydrolases"/>
    <property type="match status" value="1"/>
</dbReference>
<dbReference type="Gene3D" id="1.20.1050.90">
    <property type="entry name" value="RecF/RecN/SMC, N-terminal domain"/>
    <property type="match status" value="1"/>
</dbReference>
<dbReference type="HAMAP" id="MF_00365">
    <property type="entry name" value="RecF"/>
    <property type="match status" value="1"/>
</dbReference>
<dbReference type="InterPro" id="IPR001238">
    <property type="entry name" value="DNA-binding_RecF"/>
</dbReference>
<dbReference type="InterPro" id="IPR018078">
    <property type="entry name" value="DNA-binding_RecF_CS"/>
</dbReference>
<dbReference type="InterPro" id="IPR027417">
    <property type="entry name" value="P-loop_NTPase"/>
</dbReference>
<dbReference type="InterPro" id="IPR003395">
    <property type="entry name" value="RecF/RecN/SMC_N"/>
</dbReference>
<dbReference type="InterPro" id="IPR042174">
    <property type="entry name" value="RecF_2"/>
</dbReference>
<dbReference type="NCBIfam" id="TIGR00611">
    <property type="entry name" value="recf"/>
    <property type="match status" value="1"/>
</dbReference>
<dbReference type="PANTHER" id="PTHR32182">
    <property type="entry name" value="DNA REPLICATION AND REPAIR PROTEIN RECF"/>
    <property type="match status" value="1"/>
</dbReference>
<dbReference type="PANTHER" id="PTHR32182:SF0">
    <property type="entry name" value="DNA REPLICATION AND REPAIR PROTEIN RECF"/>
    <property type="match status" value="1"/>
</dbReference>
<dbReference type="Pfam" id="PF02463">
    <property type="entry name" value="SMC_N"/>
    <property type="match status" value="1"/>
</dbReference>
<dbReference type="SUPFAM" id="SSF52540">
    <property type="entry name" value="P-loop containing nucleoside triphosphate hydrolases"/>
    <property type="match status" value="1"/>
</dbReference>
<dbReference type="PROSITE" id="PS00617">
    <property type="entry name" value="RECF_1"/>
    <property type="match status" value="1"/>
</dbReference>
<gene>
    <name evidence="1" type="primary">recF</name>
    <name type="ordered locus">Maqu_0004</name>
</gene>
<reference key="1">
    <citation type="journal article" date="2011" name="Appl. Environ. Microbiol.">
        <title>Genomic potential of Marinobacter aquaeolei, a biogeochemical 'opportunitroph'.</title>
        <authorList>
            <person name="Singer E."/>
            <person name="Webb E.A."/>
            <person name="Nelson W.C."/>
            <person name="Heidelberg J.F."/>
            <person name="Ivanova N."/>
            <person name="Pati A."/>
            <person name="Edwards K.J."/>
        </authorList>
    </citation>
    <scope>NUCLEOTIDE SEQUENCE [LARGE SCALE GENOMIC DNA]</scope>
    <source>
        <strain>ATCC 700491 / DSM 11845 / VT8</strain>
    </source>
</reference>
<accession>A1TWJ3</accession>
<keyword id="KW-0067">ATP-binding</keyword>
<keyword id="KW-0963">Cytoplasm</keyword>
<keyword id="KW-0227">DNA damage</keyword>
<keyword id="KW-0234">DNA repair</keyword>
<keyword id="KW-0235">DNA replication</keyword>
<keyword id="KW-0238">DNA-binding</keyword>
<keyword id="KW-0547">Nucleotide-binding</keyword>
<keyword id="KW-0742">SOS response</keyword>
<evidence type="ECO:0000255" key="1">
    <source>
        <dbReference type="HAMAP-Rule" id="MF_00365"/>
    </source>
</evidence>
<proteinExistence type="inferred from homology"/>
<comment type="function">
    <text evidence="1">The RecF protein is involved in DNA metabolism; it is required for DNA replication and normal SOS inducibility. RecF binds preferentially to single-stranded, linear DNA. It also seems to bind ATP.</text>
</comment>
<comment type="subcellular location">
    <subcellularLocation>
        <location evidence="1">Cytoplasm</location>
    </subcellularLocation>
</comment>
<comment type="similarity">
    <text evidence="1">Belongs to the RecF family.</text>
</comment>
<sequence>MALVKLQTQHFRNLLSAPVEFSPSFNLLYGANGSGKTSVLEAIGYLGLGRSFRVSRHQAVVAHGQSKLTVFGALDSGLLAQESSEKVEHRIGISRDVSLKETQLRVDGEAVRSLSFLAMHLPVSVIDPGVFDIVAGGPGKRRQFLDWLVFHVEPSFSSLWQQVQRVTSQRNQMLRNGRLDESLMRVWDSQYGALAESLSDIRETVFQRFKIAFESVLAELDAPWVEGLKMDFYPGWDRSTALTEVLVNHREQERRMGHTLYGPNRADIRLKFGGRPVAETFSRGQQKTLVILMKIAQGKVLSDLGKQVTFLLDDINAELDVRHRVMLARNLQELRCQVFITSIEHPEPDTLWHDGDTPEYRMFHVEHGQLTEE</sequence>
<name>RECF_MARN8</name>
<feature type="chain" id="PRO_1000048541" description="DNA replication and repair protein RecF">
    <location>
        <begin position="1"/>
        <end position="373"/>
    </location>
</feature>
<feature type="binding site" evidence="1">
    <location>
        <begin position="30"/>
        <end position="37"/>
    </location>
    <ligand>
        <name>ATP</name>
        <dbReference type="ChEBI" id="CHEBI:30616"/>
    </ligand>
</feature>
<organism>
    <name type="scientific">Marinobacter nauticus (strain ATCC 700491 / DSM 11845 / VT8)</name>
    <name type="common">Marinobacter aquaeolei</name>
    <dbReference type="NCBI Taxonomy" id="351348"/>
    <lineage>
        <taxon>Bacteria</taxon>
        <taxon>Pseudomonadati</taxon>
        <taxon>Pseudomonadota</taxon>
        <taxon>Gammaproteobacteria</taxon>
        <taxon>Pseudomonadales</taxon>
        <taxon>Marinobacteraceae</taxon>
        <taxon>Marinobacter</taxon>
    </lineage>
</organism>
<protein>
    <recommendedName>
        <fullName evidence="1">DNA replication and repair protein RecF</fullName>
    </recommendedName>
</protein>